<keyword id="KW-0067">ATP-binding</keyword>
<keyword id="KW-0347">Helicase</keyword>
<keyword id="KW-0378">Hydrolase</keyword>
<keyword id="KW-0547">Nucleotide-binding</keyword>
<keyword id="KW-0539">Nucleus</keyword>
<keyword id="KW-1185">Reference proteome</keyword>
<keyword id="KW-0690">Ribosome biogenesis</keyword>
<keyword id="KW-0694">RNA-binding</keyword>
<keyword id="KW-0698">rRNA processing</keyword>
<sequence length="709" mass="78831">MADEPLLLNFVVDNAQSRKPEALKSSRRWTDRARDRKRQKRNSNESSKSTVKRNSGTNGASTDYKNSQKEKVINPVFDPRKPAHELKGNKRDNTFVTSLFTGDDSEHFSQDVGQNLEDNQISNIGTTKEASNAPIKTTNFAGVQLDTQLADHLNNKMNISAPTAIQSCCLPALLNTDDKDAFIEAQTGSGKTLAYLLPIVQRLIRLPKNLHTRTSGIYAVIMAPTRELCQQIYNVANKLNNNPLSHWIVSCNVIGGEKKKSEKARIRKGVNILIGTPGRLADHLENTEALDVSQVRWVVLDEGDRLMDMGFEETLTKILSYLESQSSIIKKDLSIPSRKVTMLCSATMKDTVKRLSDSALKDALYLKSSIVEETNDGYSQAPEQLLQRYVVVPPKLRLVSLVALLRSHVRSYKKIIIFLSCSDSVDFHFEAFRCAINADEMEEAVKEKPDSEGDIISNAPALRIDGKSNVYRLHGSLSQQIRTSTLNLFSSSEDSGSHILLCTDVAARGLDLPNVDLVVQYDAPFSTDDYLHRIGRTARAGHNGAAIMFLLPKESEYINLLKSSVSANILEQPNGPSGLLSAGFSQGKTNTNDWQDRATEWQLELERFILENEPMRNIAKRAFTSYVRAYATHLSSERSIFNMRDLHLGHIAKSFALREAPGKISGANSSKPRKQGGSVDKGKSKSSKDIAALMHRKAMEHYSTEHNIG</sequence>
<evidence type="ECO:0000250" key="1"/>
<evidence type="ECO:0000255" key="2">
    <source>
        <dbReference type="PROSITE-ProRule" id="PRU00541"/>
    </source>
</evidence>
<evidence type="ECO:0000255" key="3">
    <source>
        <dbReference type="PROSITE-ProRule" id="PRU00542"/>
    </source>
</evidence>
<evidence type="ECO:0000256" key="4">
    <source>
        <dbReference type="SAM" id="MobiDB-lite"/>
    </source>
</evidence>
<evidence type="ECO:0000305" key="5"/>
<feature type="chain" id="PRO_0000232259" description="ATP-dependent RNA helicase dbp7">
    <location>
        <begin position="1"/>
        <end position="709"/>
    </location>
</feature>
<feature type="domain" description="Helicase ATP-binding" evidence="2">
    <location>
        <begin position="172"/>
        <end position="366"/>
    </location>
</feature>
<feature type="domain" description="Helicase C-terminal" evidence="3">
    <location>
        <begin position="404"/>
        <end position="580"/>
    </location>
</feature>
<feature type="region of interest" description="Disordered" evidence="4">
    <location>
        <begin position="13"/>
        <end position="90"/>
    </location>
</feature>
<feature type="region of interest" description="Disordered" evidence="4">
    <location>
        <begin position="662"/>
        <end position="690"/>
    </location>
</feature>
<feature type="short sequence motif" description="Q motif">
    <location>
        <begin position="138"/>
        <end position="167"/>
    </location>
</feature>
<feature type="short sequence motif" description="DEAD box">
    <location>
        <begin position="301"/>
        <end position="304"/>
    </location>
</feature>
<feature type="compositionally biased region" description="Basic and acidic residues" evidence="4">
    <location>
        <begin position="16"/>
        <end position="34"/>
    </location>
</feature>
<feature type="compositionally biased region" description="Polar residues" evidence="4">
    <location>
        <begin position="44"/>
        <end position="65"/>
    </location>
</feature>
<feature type="compositionally biased region" description="Basic and acidic residues" evidence="4">
    <location>
        <begin position="66"/>
        <end position="90"/>
    </location>
</feature>
<feature type="binding site" evidence="2">
    <location>
        <begin position="185"/>
        <end position="192"/>
    </location>
    <ligand>
        <name>ATP</name>
        <dbReference type="ChEBI" id="CHEBI:30616"/>
    </ligand>
</feature>
<gene>
    <name type="primary">dbp7</name>
    <name type="ORF">SPBC21H7.04</name>
</gene>
<dbReference type="EC" id="3.6.4.13"/>
<dbReference type="EMBL" id="CU329671">
    <property type="protein sequence ID" value="CAA18864.1"/>
    <property type="molecule type" value="Genomic_DNA"/>
</dbReference>
<dbReference type="PIR" id="T39930">
    <property type="entry name" value="T39930"/>
</dbReference>
<dbReference type="RefSeq" id="NP_595929.1">
    <property type="nucleotide sequence ID" value="NM_001021837.2"/>
</dbReference>
<dbReference type="SMR" id="O60173"/>
<dbReference type="BioGRID" id="277046">
    <property type="interactions" value="3"/>
</dbReference>
<dbReference type="FunCoup" id="O60173">
    <property type="interactions" value="709"/>
</dbReference>
<dbReference type="STRING" id="284812.O60173"/>
<dbReference type="iPTMnet" id="O60173"/>
<dbReference type="PaxDb" id="4896-SPBC21H7.04.1"/>
<dbReference type="EnsemblFungi" id="SPBC21H7.04.1">
    <property type="protein sequence ID" value="SPBC21H7.04.1:pep"/>
    <property type="gene ID" value="SPBC21H7.04"/>
</dbReference>
<dbReference type="GeneID" id="2540518"/>
<dbReference type="KEGG" id="spo:2540518"/>
<dbReference type="PomBase" id="SPBC21H7.04">
    <property type="gene designation" value="dbp7"/>
</dbReference>
<dbReference type="VEuPathDB" id="FungiDB:SPBC21H7.04"/>
<dbReference type="eggNOG" id="KOG0348">
    <property type="taxonomic scope" value="Eukaryota"/>
</dbReference>
<dbReference type="HOGENOM" id="CLU_003041_26_2_1"/>
<dbReference type="InParanoid" id="O60173"/>
<dbReference type="OMA" id="QMGFERW"/>
<dbReference type="PhylomeDB" id="O60173"/>
<dbReference type="PRO" id="PR:O60173"/>
<dbReference type="Proteomes" id="UP000002485">
    <property type="component" value="Chromosome II"/>
</dbReference>
<dbReference type="GO" id="GO:0005730">
    <property type="term" value="C:nucleolus"/>
    <property type="evidence" value="ECO:0007005"/>
    <property type="project" value="PomBase"/>
</dbReference>
<dbReference type="GO" id="GO:0005634">
    <property type="term" value="C:nucleus"/>
    <property type="evidence" value="ECO:0007005"/>
    <property type="project" value="PomBase"/>
</dbReference>
<dbReference type="GO" id="GO:0005524">
    <property type="term" value="F:ATP binding"/>
    <property type="evidence" value="ECO:0007669"/>
    <property type="project" value="UniProtKB-KW"/>
</dbReference>
<dbReference type="GO" id="GO:0016887">
    <property type="term" value="F:ATP hydrolysis activity"/>
    <property type="evidence" value="ECO:0007669"/>
    <property type="project" value="RHEA"/>
</dbReference>
<dbReference type="GO" id="GO:0003723">
    <property type="term" value="F:RNA binding"/>
    <property type="evidence" value="ECO:0007669"/>
    <property type="project" value="UniProtKB-KW"/>
</dbReference>
<dbReference type="GO" id="GO:0003724">
    <property type="term" value="F:RNA helicase activity"/>
    <property type="evidence" value="ECO:0000266"/>
    <property type="project" value="PomBase"/>
</dbReference>
<dbReference type="GO" id="GO:0042254">
    <property type="term" value="P:ribosome biogenesis"/>
    <property type="evidence" value="ECO:0000318"/>
    <property type="project" value="GO_Central"/>
</dbReference>
<dbReference type="GO" id="GO:0006364">
    <property type="term" value="P:rRNA processing"/>
    <property type="evidence" value="ECO:0000266"/>
    <property type="project" value="PomBase"/>
</dbReference>
<dbReference type="CDD" id="cd17949">
    <property type="entry name" value="DEADc_DDX31"/>
    <property type="match status" value="1"/>
</dbReference>
<dbReference type="CDD" id="cd18787">
    <property type="entry name" value="SF2_C_DEAD"/>
    <property type="match status" value="1"/>
</dbReference>
<dbReference type="Gene3D" id="3.40.50.300">
    <property type="entry name" value="P-loop containing nucleotide triphosphate hydrolases"/>
    <property type="match status" value="2"/>
</dbReference>
<dbReference type="InterPro" id="IPR011545">
    <property type="entry name" value="DEAD/DEAH_box_helicase_dom"/>
</dbReference>
<dbReference type="InterPro" id="IPR014001">
    <property type="entry name" value="Helicase_ATP-bd"/>
</dbReference>
<dbReference type="InterPro" id="IPR001650">
    <property type="entry name" value="Helicase_C-like"/>
</dbReference>
<dbReference type="InterPro" id="IPR027417">
    <property type="entry name" value="P-loop_NTPase"/>
</dbReference>
<dbReference type="InterPro" id="IPR025313">
    <property type="entry name" value="SPB4-like_CTE"/>
</dbReference>
<dbReference type="PANTHER" id="PTHR24031">
    <property type="entry name" value="RNA HELICASE"/>
    <property type="match status" value="1"/>
</dbReference>
<dbReference type="Pfam" id="PF13959">
    <property type="entry name" value="CTE_SPB4"/>
    <property type="match status" value="1"/>
</dbReference>
<dbReference type="Pfam" id="PF00270">
    <property type="entry name" value="DEAD"/>
    <property type="match status" value="1"/>
</dbReference>
<dbReference type="Pfam" id="PF00271">
    <property type="entry name" value="Helicase_C"/>
    <property type="match status" value="1"/>
</dbReference>
<dbReference type="SMART" id="SM00487">
    <property type="entry name" value="DEXDc"/>
    <property type="match status" value="1"/>
</dbReference>
<dbReference type="SMART" id="SM01178">
    <property type="entry name" value="DUF4217"/>
    <property type="match status" value="1"/>
</dbReference>
<dbReference type="SMART" id="SM00490">
    <property type="entry name" value="HELICc"/>
    <property type="match status" value="1"/>
</dbReference>
<dbReference type="SUPFAM" id="SSF52540">
    <property type="entry name" value="P-loop containing nucleoside triphosphate hydrolases"/>
    <property type="match status" value="1"/>
</dbReference>
<dbReference type="PROSITE" id="PS51192">
    <property type="entry name" value="HELICASE_ATP_BIND_1"/>
    <property type="match status" value="1"/>
</dbReference>
<dbReference type="PROSITE" id="PS51194">
    <property type="entry name" value="HELICASE_CTER"/>
    <property type="match status" value="1"/>
</dbReference>
<dbReference type="PROSITE" id="PS51195">
    <property type="entry name" value="Q_MOTIF"/>
    <property type="match status" value="1"/>
</dbReference>
<protein>
    <recommendedName>
        <fullName>ATP-dependent RNA helicase dbp7</fullName>
        <ecNumber>3.6.4.13</ecNumber>
    </recommendedName>
</protein>
<comment type="function">
    <text evidence="1">ATP-binding RNA helicase involved in the biogenesis of 60S ribosomal subunits and is required for the normal formation of 25S and 5.8S rRNAs.</text>
</comment>
<comment type="catalytic activity">
    <reaction>
        <text>ATP + H2O = ADP + phosphate + H(+)</text>
        <dbReference type="Rhea" id="RHEA:13065"/>
        <dbReference type="ChEBI" id="CHEBI:15377"/>
        <dbReference type="ChEBI" id="CHEBI:15378"/>
        <dbReference type="ChEBI" id="CHEBI:30616"/>
        <dbReference type="ChEBI" id="CHEBI:43474"/>
        <dbReference type="ChEBI" id="CHEBI:456216"/>
        <dbReference type="EC" id="3.6.4.13"/>
    </reaction>
</comment>
<comment type="subcellular location">
    <subcellularLocation>
        <location evidence="1">Nucleus</location>
        <location evidence="1">Nucleolus</location>
    </subcellularLocation>
</comment>
<comment type="domain">
    <text>The Q motif is unique to and characteristic of the DEAD box family of RNA helicases and controls ATP binding and hydrolysis.</text>
</comment>
<comment type="miscellaneous">
    <text>Present with 1460 molecules/cell in log phase SD medium.</text>
</comment>
<comment type="similarity">
    <text evidence="5">Belongs to the DEAD box helicase family. DDX31/DBP7 subfamily.</text>
</comment>
<accession>O60173</accession>
<proteinExistence type="inferred from homology"/>
<reference key="1">
    <citation type="journal article" date="2002" name="Nature">
        <title>The genome sequence of Schizosaccharomyces pombe.</title>
        <authorList>
            <person name="Wood V."/>
            <person name="Gwilliam R."/>
            <person name="Rajandream M.A."/>
            <person name="Lyne M.H."/>
            <person name="Lyne R."/>
            <person name="Stewart A."/>
            <person name="Sgouros J.G."/>
            <person name="Peat N."/>
            <person name="Hayles J."/>
            <person name="Baker S.G."/>
            <person name="Basham D."/>
            <person name="Bowman S."/>
            <person name="Brooks K."/>
            <person name="Brown D."/>
            <person name="Brown S."/>
            <person name="Chillingworth T."/>
            <person name="Churcher C.M."/>
            <person name="Collins M."/>
            <person name="Connor R."/>
            <person name="Cronin A."/>
            <person name="Davis P."/>
            <person name="Feltwell T."/>
            <person name="Fraser A."/>
            <person name="Gentles S."/>
            <person name="Goble A."/>
            <person name="Hamlin N."/>
            <person name="Harris D.E."/>
            <person name="Hidalgo J."/>
            <person name="Hodgson G."/>
            <person name="Holroyd S."/>
            <person name="Hornsby T."/>
            <person name="Howarth S."/>
            <person name="Huckle E.J."/>
            <person name="Hunt S."/>
            <person name="Jagels K."/>
            <person name="James K.D."/>
            <person name="Jones L."/>
            <person name="Jones M."/>
            <person name="Leather S."/>
            <person name="McDonald S."/>
            <person name="McLean J."/>
            <person name="Mooney P."/>
            <person name="Moule S."/>
            <person name="Mungall K.L."/>
            <person name="Murphy L.D."/>
            <person name="Niblett D."/>
            <person name="Odell C."/>
            <person name="Oliver K."/>
            <person name="O'Neil S."/>
            <person name="Pearson D."/>
            <person name="Quail M.A."/>
            <person name="Rabbinowitsch E."/>
            <person name="Rutherford K.M."/>
            <person name="Rutter S."/>
            <person name="Saunders D."/>
            <person name="Seeger K."/>
            <person name="Sharp S."/>
            <person name="Skelton J."/>
            <person name="Simmonds M.N."/>
            <person name="Squares R."/>
            <person name="Squares S."/>
            <person name="Stevens K."/>
            <person name="Taylor K."/>
            <person name="Taylor R.G."/>
            <person name="Tivey A."/>
            <person name="Walsh S.V."/>
            <person name="Warren T."/>
            <person name="Whitehead S."/>
            <person name="Woodward J.R."/>
            <person name="Volckaert G."/>
            <person name="Aert R."/>
            <person name="Robben J."/>
            <person name="Grymonprez B."/>
            <person name="Weltjens I."/>
            <person name="Vanstreels E."/>
            <person name="Rieger M."/>
            <person name="Schaefer M."/>
            <person name="Mueller-Auer S."/>
            <person name="Gabel C."/>
            <person name="Fuchs M."/>
            <person name="Duesterhoeft A."/>
            <person name="Fritzc C."/>
            <person name="Holzer E."/>
            <person name="Moestl D."/>
            <person name="Hilbert H."/>
            <person name="Borzym K."/>
            <person name="Langer I."/>
            <person name="Beck A."/>
            <person name="Lehrach H."/>
            <person name="Reinhardt R."/>
            <person name="Pohl T.M."/>
            <person name="Eger P."/>
            <person name="Zimmermann W."/>
            <person name="Wedler H."/>
            <person name="Wambutt R."/>
            <person name="Purnelle B."/>
            <person name="Goffeau A."/>
            <person name="Cadieu E."/>
            <person name="Dreano S."/>
            <person name="Gloux S."/>
            <person name="Lelaure V."/>
            <person name="Mottier S."/>
            <person name="Galibert F."/>
            <person name="Aves S.J."/>
            <person name="Xiang Z."/>
            <person name="Hunt C."/>
            <person name="Moore K."/>
            <person name="Hurst S.M."/>
            <person name="Lucas M."/>
            <person name="Rochet M."/>
            <person name="Gaillardin C."/>
            <person name="Tallada V.A."/>
            <person name="Garzon A."/>
            <person name="Thode G."/>
            <person name="Daga R.R."/>
            <person name="Cruzado L."/>
            <person name="Jimenez J."/>
            <person name="Sanchez M."/>
            <person name="del Rey F."/>
            <person name="Benito J."/>
            <person name="Dominguez A."/>
            <person name="Revuelta J.L."/>
            <person name="Moreno S."/>
            <person name="Armstrong J."/>
            <person name="Forsburg S.L."/>
            <person name="Cerutti L."/>
            <person name="Lowe T."/>
            <person name="McCombie W.R."/>
            <person name="Paulsen I."/>
            <person name="Potashkin J."/>
            <person name="Shpakovski G.V."/>
            <person name="Ussery D."/>
            <person name="Barrell B.G."/>
            <person name="Nurse P."/>
        </authorList>
    </citation>
    <scope>NUCLEOTIDE SEQUENCE [LARGE SCALE GENOMIC DNA]</scope>
    <source>
        <strain>972 / ATCC 24843</strain>
    </source>
</reference>
<name>DBP7_SCHPO</name>
<organism>
    <name type="scientific">Schizosaccharomyces pombe (strain 972 / ATCC 24843)</name>
    <name type="common">Fission yeast</name>
    <dbReference type="NCBI Taxonomy" id="284812"/>
    <lineage>
        <taxon>Eukaryota</taxon>
        <taxon>Fungi</taxon>
        <taxon>Dikarya</taxon>
        <taxon>Ascomycota</taxon>
        <taxon>Taphrinomycotina</taxon>
        <taxon>Schizosaccharomycetes</taxon>
        <taxon>Schizosaccharomycetales</taxon>
        <taxon>Schizosaccharomycetaceae</taxon>
        <taxon>Schizosaccharomyces</taxon>
    </lineage>
</organism>